<accession>P08443</accession>
<evidence type="ECO:0000255" key="1"/>
<evidence type="ECO:0000305" key="2"/>
<reference key="1">
    <citation type="journal article" date="1987" name="J. Mol. Biol.">
        <title>The organization and sequence of the genes for ATP synthase subunits in the cyanobacterium Synechococcus 6301. Support for an endosymbiotic origin of chloroplasts.</title>
        <authorList>
            <person name="Cozens A.L."/>
            <person name="Walker J.E."/>
        </authorList>
    </citation>
    <scope>NUCLEOTIDE SEQUENCE [GENOMIC DNA]</scope>
</reference>
<reference key="2">
    <citation type="journal article" date="2007" name="Photosyn. Res.">
        <title>Complete nucleotide sequence of the freshwater unicellular cyanobacterium Synechococcus elongatus PCC 6301 chromosome: gene content and organization.</title>
        <authorList>
            <person name="Sugita C."/>
            <person name="Ogata K."/>
            <person name="Shikata M."/>
            <person name="Jikuya H."/>
            <person name="Takano J."/>
            <person name="Furumichi M."/>
            <person name="Kanehisa M."/>
            <person name="Omata T."/>
            <person name="Sugiura M."/>
            <person name="Sugita M."/>
        </authorList>
    </citation>
    <scope>NUCLEOTIDE SEQUENCE [LARGE SCALE GENOMIC DNA]</scope>
    <source>
        <strain>ATCC 27144 / PCC 6301 / SAUG 1402/1</strain>
    </source>
</reference>
<proteinExistence type="inferred from homology"/>
<dbReference type="EMBL" id="X05302">
    <property type="protein sequence ID" value="CAA28922.1"/>
    <property type="molecule type" value="Genomic_DNA"/>
</dbReference>
<dbReference type="EMBL" id="AP008231">
    <property type="protein sequence ID" value="BAD79373.1"/>
    <property type="molecule type" value="Genomic_DNA"/>
</dbReference>
<dbReference type="PIR" id="S10825">
    <property type="entry name" value="G1YC"/>
</dbReference>
<dbReference type="TCDB" id="1.A.77.3.21">
    <property type="family name" value="the mg(2+)/ca(2+) uniporter (mcu) family"/>
</dbReference>
<dbReference type="KEGG" id="syc:syc1183_c"/>
<dbReference type="eggNOG" id="ENOG5032SW6">
    <property type="taxonomic scope" value="Bacteria"/>
</dbReference>
<dbReference type="Proteomes" id="UP000001175">
    <property type="component" value="Chromosome"/>
</dbReference>
<dbReference type="GO" id="GO:0005886">
    <property type="term" value="C:plasma membrane"/>
    <property type="evidence" value="ECO:0007669"/>
    <property type="project" value="UniProtKB-SubCell"/>
</dbReference>
<dbReference type="GO" id="GO:0045259">
    <property type="term" value="C:proton-transporting ATP synthase complex"/>
    <property type="evidence" value="ECO:0007669"/>
    <property type="project" value="UniProtKB-KW"/>
</dbReference>
<dbReference type="GO" id="GO:1902600">
    <property type="term" value="P:proton transmembrane transport"/>
    <property type="evidence" value="ECO:0007669"/>
    <property type="project" value="UniProtKB-KW"/>
</dbReference>
<dbReference type="InterPro" id="IPR056309">
    <property type="entry name" value="CGL160/ATPI_dom"/>
</dbReference>
<dbReference type="PANTHER" id="PTHR34118">
    <property type="entry name" value="NF-KAPPA-B INHIBITOR-LIKE PROTEIN-RELATED"/>
    <property type="match status" value="1"/>
</dbReference>
<dbReference type="PANTHER" id="PTHR34118:SF6">
    <property type="entry name" value="PROTEIN CONSERVED ONLY IN THE GREEN LINEAGE 160, CHLOROPLASTIC"/>
    <property type="match status" value="1"/>
</dbReference>
<dbReference type="Pfam" id="PF24763">
    <property type="entry name" value="CGL160_C"/>
    <property type="match status" value="1"/>
</dbReference>
<feature type="chain" id="PRO_0000071717" description="ATP synthase protein I">
    <location>
        <begin position="1"/>
        <end position="118"/>
    </location>
</feature>
<feature type="transmembrane region" description="Helical" evidence="1">
    <location>
        <begin position="11"/>
        <end position="31"/>
    </location>
</feature>
<feature type="transmembrane region" description="Helical" evidence="1">
    <location>
        <begin position="73"/>
        <end position="93"/>
    </location>
</feature>
<feature type="transmembrane region" description="Helical" evidence="1">
    <location>
        <begin position="94"/>
        <end position="114"/>
    </location>
</feature>
<protein>
    <recommendedName>
        <fullName>ATP synthase protein I</fullName>
    </recommendedName>
</protein>
<comment type="function">
    <text>A possible function for this protein is to guide the assembly of the membrane sector of the ATPase enzyme complex.</text>
</comment>
<comment type="subcellular location">
    <subcellularLocation>
        <location evidence="2">Cell membrane</location>
        <topology evidence="2">Multi-pass membrane protein</topology>
    </subcellularLocation>
</comment>
<comment type="similarity">
    <text evidence="2">Belongs to the bacterial AtpI family.</text>
</comment>
<keyword id="KW-1003">Cell membrane</keyword>
<keyword id="KW-0138">CF(0)</keyword>
<keyword id="KW-0375">Hydrogen ion transport</keyword>
<keyword id="KW-0406">Ion transport</keyword>
<keyword id="KW-0472">Membrane</keyword>
<keyword id="KW-0812">Transmembrane</keyword>
<keyword id="KW-1133">Transmembrane helix</keyword>
<keyword id="KW-0813">Transport</keyword>
<organism>
    <name type="scientific">Synechococcus sp. (strain ATCC 27144 / PCC 6301 / SAUG 1402/1)</name>
    <name type="common">Anacystis nidulans</name>
    <dbReference type="NCBI Taxonomy" id="269084"/>
    <lineage>
        <taxon>Bacteria</taxon>
        <taxon>Bacillati</taxon>
        <taxon>Cyanobacteriota</taxon>
        <taxon>Cyanophyceae</taxon>
        <taxon>Synechococcales</taxon>
        <taxon>Synechococcaceae</taxon>
        <taxon>Synechococcus</taxon>
    </lineage>
</organism>
<sequence>MAEYYALQRQLLQVTLICTVVIFGAVWWAYSLNTAASYLLGAMGGLLYLRMLGKAVERIGERRRQFGKSRLALFVVLIVLAARWQYLELMPVFLGFLTYKAALIWYTLRAVIPTAENS</sequence>
<gene>
    <name type="primary">atpI</name>
    <name type="synonym">atp1</name>
    <name type="ordered locus">syc1183_c</name>
</gene>
<name>ATPZ_SYNP6</name>